<organism>
    <name type="scientific">Exiguobacterium sibiricum (strain DSM 17290 / CCUG 55495 / CIP 109462 / JCM 13490 / 255-15)</name>
    <dbReference type="NCBI Taxonomy" id="262543"/>
    <lineage>
        <taxon>Bacteria</taxon>
        <taxon>Bacillati</taxon>
        <taxon>Bacillota</taxon>
        <taxon>Bacilli</taxon>
        <taxon>Bacillales</taxon>
        <taxon>Bacillales Family XII. Incertae Sedis</taxon>
        <taxon>Exiguobacterium</taxon>
    </lineage>
</organism>
<name>T23O_EXIS2</name>
<dbReference type="EC" id="1.13.11.11" evidence="1"/>
<dbReference type="EMBL" id="CP001022">
    <property type="protein sequence ID" value="ACB59666.1"/>
    <property type="molecule type" value="Genomic_DNA"/>
</dbReference>
<dbReference type="RefSeq" id="WP_012369091.1">
    <property type="nucleotide sequence ID" value="NC_010556.1"/>
</dbReference>
<dbReference type="SMR" id="B1YHD4"/>
<dbReference type="STRING" id="262543.Exig_0180"/>
<dbReference type="KEGG" id="esi:Exig_0180"/>
<dbReference type="eggNOG" id="COG3483">
    <property type="taxonomic scope" value="Bacteria"/>
</dbReference>
<dbReference type="HOGENOM" id="CLU_063240_0_0_9"/>
<dbReference type="OrthoDB" id="9776847at2"/>
<dbReference type="UniPathway" id="UPA00333">
    <property type="reaction ID" value="UER00453"/>
</dbReference>
<dbReference type="Proteomes" id="UP000001681">
    <property type="component" value="Chromosome"/>
</dbReference>
<dbReference type="GO" id="GO:0020037">
    <property type="term" value="F:heme binding"/>
    <property type="evidence" value="ECO:0000250"/>
    <property type="project" value="UniProtKB"/>
</dbReference>
<dbReference type="GO" id="GO:0046872">
    <property type="term" value="F:metal ion binding"/>
    <property type="evidence" value="ECO:0007669"/>
    <property type="project" value="UniProtKB-KW"/>
</dbReference>
<dbReference type="GO" id="GO:0004833">
    <property type="term" value="F:tryptophan 2,3-dioxygenase activity"/>
    <property type="evidence" value="ECO:0000250"/>
    <property type="project" value="UniProtKB"/>
</dbReference>
<dbReference type="GO" id="GO:0019442">
    <property type="term" value="P:L-tryptophan catabolic process to acetyl-CoA"/>
    <property type="evidence" value="ECO:0007669"/>
    <property type="project" value="TreeGrafter"/>
</dbReference>
<dbReference type="GO" id="GO:0019441">
    <property type="term" value="P:L-tryptophan catabolic process to kynurenine"/>
    <property type="evidence" value="ECO:0000250"/>
    <property type="project" value="UniProtKB"/>
</dbReference>
<dbReference type="FunFam" id="1.20.58.480:FF:000001">
    <property type="entry name" value="Tryptophan 2,3-dioxygenase"/>
    <property type="match status" value="1"/>
</dbReference>
<dbReference type="Gene3D" id="1.20.58.480">
    <property type="match status" value="1"/>
</dbReference>
<dbReference type="HAMAP" id="MF_01972">
    <property type="entry name" value="T23O"/>
    <property type="match status" value="1"/>
</dbReference>
<dbReference type="InterPro" id="IPR037217">
    <property type="entry name" value="Trp/Indoleamine_2_3_dOase-like"/>
</dbReference>
<dbReference type="InterPro" id="IPR017485">
    <property type="entry name" value="Trp_2-3-dOase_bac"/>
</dbReference>
<dbReference type="InterPro" id="IPR004981">
    <property type="entry name" value="Trp_2_3_dOase"/>
</dbReference>
<dbReference type="NCBIfam" id="TIGR03036">
    <property type="entry name" value="trp_2_3_diox"/>
    <property type="match status" value="1"/>
</dbReference>
<dbReference type="PANTHER" id="PTHR10138">
    <property type="entry name" value="TRYPTOPHAN 2,3-DIOXYGENASE"/>
    <property type="match status" value="1"/>
</dbReference>
<dbReference type="PANTHER" id="PTHR10138:SF0">
    <property type="entry name" value="TRYPTOPHAN 2,3-DIOXYGENASE"/>
    <property type="match status" value="1"/>
</dbReference>
<dbReference type="Pfam" id="PF03301">
    <property type="entry name" value="Trp_dioxygenase"/>
    <property type="match status" value="2"/>
</dbReference>
<dbReference type="SUPFAM" id="SSF140959">
    <property type="entry name" value="Indolic compounds 2,3-dioxygenase-like"/>
    <property type="match status" value="1"/>
</dbReference>
<evidence type="ECO:0000255" key="1">
    <source>
        <dbReference type="HAMAP-Rule" id="MF_01972"/>
    </source>
</evidence>
<reference key="1">
    <citation type="submission" date="2008-04" db="EMBL/GenBank/DDBJ databases">
        <title>Complete sequence of chromosome of Exiguobacterium sibiricum 255-15.</title>
        <authorList>
            <consortium name="US DOE Joint Genome Institute"/>
            <person name="Copeland A."/>
            <person name="Lucas S."/>
            <person name="Lapidus A."/>
            <person name="Glavina del Rio T."/>
            <person name="Dalin E."/>
            <person name="Tice H."/>
            <person name="Bruce D."/>
            <person name="Goodwin L."/>
            <person name="Pitluck S."/>
            <person name="Kiss H."/>
            <person name="Chertkov O."/>
            <person name="Monk C."/>
            <person name="Brettin T."/>
            <person name="Detter J.C."/>
            <person name="Han C."/>
            <person name="Kuske C.R."/>
            <person name="Schmutz J."/>
            <person name="Larimer F."/>
            <person name="Land M."/>
            <person name="Hauser L."/>
            <person name="Kyrpides N."/>
            <person name="Mikhailova N."/>
            <person name="Vishnivetskaya T."/>
            <person name="Rodrigues D.F."/>
            <person name="Gilichinsky D."/>
            <person name="Tiedje J."/>
            <person name="Richardson P."/>
        </authorList>
    </citation>
    <scope>NUCLEOTIDE SEQUENCE [LARGE SCALE GENOMIC DNA]</scope>
    <source>
        <strain>DSM 17290 / CCUG 55495 / CIP 109462 / JCM 13490 / 255-15</strain>
    </source>
</reference>
<feature type="chain" id="PRO_0000360115" description="Tryptophan 2,3-dioxygenase">
    <location>
        <begin position="1"/>
        <end position="279"/>
    </location>
</feature>
<feature type="binding site" evidence="1">
    <location>
        <begin position="48"/>
        <end position="52"/>
    </location>
    <ligand>
        <name>substrate</name>
    </ligand>
</feature>
<feature type="binding site" evidence="1">
    <location>
        <position position="110"/>
    </location>
    <ligand>
        <name>substrate</name>
    </ligand>
</feature>
<feature type="binding site" evidence="1">
    <location>
        <position position="114"/>
    </location>
    <ligand>
        <name>substrate</name>
    </ligand>
</feature>
<feature type="binding site" description="axial binding residue" evidence="1">
    <location>
        <position position="237"/>
    </location>
    <ligand>
        <name>heme</name>
        <dbReference type="ChEBI" id="CHEBI:30413"/>
    </ligand>
    <ligandPart>
        <name>Fe</name>
        <dbReference type="ChEBI" id="CHEBI:18248"/>
    </ligandPart>
</feature>
<feature type="binding site" evidence="1">
    <location>
        <position position="251"/>
    </location>
    <ligand>
        <name>substrate</name>
    </ligand>
</feature>
<keyword id="KW-0223">Dioxygenase</keyword>
<keyword id="KW-0349">Heme</keyword>
<keyword id="KW-0408">Iron</keyword>
<keyword id="KW-0479">Metal-binding</keyword>
<keyword id="KW-0560">Oxidoreductase</keyword>
<keyword id="KW-1185">Reference proteome</keyword>
<keyword id="KW-0823">Tryptophan catabolism</keyword>
<accession>B1YHD4</accession>
<sequence>MKQTDATNIEESIQTDFKKDMSYGDYLQLDSLLTSQQRLSDHHDEMLFIVIHQTSELWMKLILHEMTAAIQAIADDQLERSFKMLARVSKIQQQLIQSWSVLSTLTPAEYLEFRDSLGHSSGFQSYQNRQIEFSLGFKNAQMLRVYEHETALFAQLNDDLQTPSIYDETVRAMHRRGLPIDEAVLNRDVTQDWEADASVEAAWAIVYQDVEQYWDLYELGEKLLDIGSQQQMWRFNHMSTVERIIGQKPGTGGSSGVSYLRRVLDHRFFPELWSVRTKL</sequence>
<gene>
    <name evidence="1" type="primary">kynA</name>
    <name type="ordered locus">Exig_0180</name>
</gene>
<protein>
    <recommendedName>
        <fullName evidence="1">Tryptophan 2,3-dioxygenase</fullName>
        <shortName evidence="1">TDO</shortName>
        <ecNumber evidence="1">1.13.11.11</ecNumber>
    </recommendedName>
    <alternativeName>
        <fullName evidence="1">Tryptamin 2,3-dioxygenase</fullName>
    </alternativeName>
    <alternativeName>
        <fullName evidence="1">Tryptophan oxygenase</fullName>
        <shortName evidence="1">TO</shortName>
        <shortName evidence="1">TRPO</shortName>
    </alternativeName>
    <alternativeName>
        <fullName evidence="1">Tryptophan pyrrolase</fullName>
    </alternativeName>
    <alternativeName>
        <fullName evidence="1">Tryptophanase</fullName>
    </alternativeName>
</protein>
<comment type="function">
    <text evidence="1">Heme-dependent dioxygenase that catalyzes the oxidative cleavage of the L-tryptophan (L-Trp) pyrrole ring and converts L-tryptophan to N-formyl-L-kynurenine. Catalyzes the oxidative cleavage of the indole moiety.</text>
</comment>
<comment type="catalytic activity">
    <reaction evidence="1">
        <text>L-tryptophan + O2 = N-formyl-L-kynurenine</text>
        <dbReference type="Rhea" id="RHEA:24536"/>
        <dbReference type="ChEBI" id="CHEBI:15379"/>
        <dbReference type="ChEBI" id="CHEBI:57912"/>
        <dbReference type="ChEBI" id="CHEBI:58629"/>
        <dbReference type="EC" id="1.13.11.11"/>
    </reaction>
</comment>
<comment type="cofactor">
    <cofactor evidence="1">
        <name>heme</name>
        <dbReference type="ChEBI" id="CHEBI:30413"/>
    </cofactor>
    <text evidence="1">Binds 1 heme group per subunit.</text>
</comment>
<comment type="pathway">
    <text evidence="1">Amino-acid degradation; L-tryptophan degradation via kynurenine pathway; L-kynurenine from L-tryptophan: step 1/2.</text>
</comment>
<comment type="subunit">
    <text evidence="1">Homotetramer.</text>
</comment>
<comment type="similarity">
    <text evidence="1">Belongs to the tryptophan 2,3-dioxygenase family.</text>
</comment>
<proteinExistence type="inferred from homology"/>